<sequence length="111" mass="12075">MIGVVLVLASLLSVGGQLCQKQATRPLTTGGRRRHLMLWLGLALICMGAAMVLWLLVLQTLPVGIAYPMLSLNFVWVTLAAWKIWHEQVPPRHWLGVALIISGIIILGSAA</sequence>
<organism>
    <name type="scientific">Salmonella schwarzengrund (strain CVM19633)</name>
    <dbReference type="NCBI Taxonomy" id="439843"/>
    <lineage>
        <taxon>Bacteria</taxon>
        <taxon>Pseudomonadati</taxon>
        <taxon>Pseudomonadota</taxon>
        <taxon>Gammaproteobacteria</taxon>
        <taxon>Enterobacterales</taxon>
        <taxon>Enterobacteriaceae</taxon>
        <taxon>Salmonella</taxon>
    </lineage>
</organism>
<protein>
    <recommendedName>
        <fullName evidence="1">Probable 4-amino-4-deoxy-L-arabinose-phosphoundecaprenol flippase subunit ArnE</fullName>
        <shortName evidence="1">L-Ara4N-phosphoundecaprenol flippase subunit ArnE</shortName>
    </recommendedName>
    <alternativeName>
        <fullName evidence="1">Undecaprenyl phosphate-aminoarabinose flippase subunit ArnE</fullName>
    </alternativeName>
</protein>
<evidence type="ECO:0000255" key="1">
    <source>
        <dbReference type="HAMAP-Rule" id="MF_01869"/>
    </source>
</evidence>
<proteinExistence type="inferred from homology"/>
<dbReference type="EMBL" id="CP001127">
    <property type="protein sequence ID" value="ACF92256.1"/>
    <property type="molecule type" value="Genomic_DNA"/>
</dbReference>
<dbReference type="RefSeq" id="WP_000580688.1">
    <property type="nucleotide sequence ID" value="NC_011094.1"/>
</dbReference>
<dbReference type="SMR" id="B4TPI5"/>
<dbReference type="KEGG" id="sew:SeSA_A2530"/>
<dbReference type="HOGENOM" id="CLU_131462_5_1_6"/>
<dbReference type="UniPathway" id="UPA00030"/>
<dbReference type="Proteomes" id="UP000001865">
    <property type="component" value="Chromosome"/>
</dbReference>
<dbReference type="GO" id="GO:0005886">
    <property type="term" value="C:plasma membrane"/>
    <property type="evidence" value="ECO:0007669"/>
    <property type="project" value="UniProtKB-SubCell"/>
</dbReference>
<dbReference type="GO" id="GO:1901505">
    <property type="term" value="F:carbohydrate derivative transmembrane transporter activity"/>
    <property type="evidence" value="ECO:0007669"/>
    <property type="project" value="InterPro"/>
</dbReference>
<dbReference type="GO" id="GO:0009245">
    <property type="term" value="P:lipid A biosynthetic process"/>
    <property type="evidence" value="ECO:0007669"/>
    <property type="project" value="UniProtKB-UniRule"/>
</dbReference>
<dbReference type="GO" id="GO:0009103">
    <property type="term" value="P:lipopolysaccharide biosynthetic process"/>
    <property type="evidence" value="ECO:0007669"/>
    <property type="project" value="UniProtKB-UniRule"/>
</dbReference>
<dbReference type="FunFam" id="1.10.3730.20:FF:000002">
    <property type="entry name" value="Probable 4-amino-4-deoxy-L-arabinose-phosphoundecaprenol flippase subunit ArnE"/>
    <property type="match status" value="1"/>
</dbReference>
<dbReference type="Gene3D" id="1.10.3730.20">
    <property type="match status" value="1"/>
</dbReference>
<dbReference type="HAMAP" id="MF_01869">
    <property type="entry name" value="Flippase_ArnE"/>
    <property type="match status" value="1"/>
</dbReference>
<dbReference type="InterPro" id="IPR000620">
    <property type="entry name" value="EamA_dom"/>
</dbReference>
<dbReference type="InterPro" id="IPR022883">
    <property type="entry name" value="Flippase_ArnE"/>
</dbReference>
<dbReference type="InterPro" id="IPR000390">
    <property type="entry name" value="Small_drug/metabolite_transptr"/>
</dbReference>
<dbReference type="NCBIfam" id="NF011625">
    <property type="entry name" value="PRK15051.1"/>
    <property type="match status" value="1"/>
</dbReference>
<dbReference type="PANTHER" id="PTHR30561:SF23">
    <property type="entry name" value="4-AMINO-4-DEOXY-L-ARABINOSE-PHOSPHOUNDECAPRENOL FLIPPASE SUBUNIT ARNE-RELATED"/>
    <property type="match status" value="1"/>
</dbReference>
<dbReference type="PANTHER" id="PTHR30561">
    <property type="entry name" value="SMR FAMILY PROTON-DEPENDENT DRUG EFFLUX TRANSPORTER SUGE"/>
    <property type="match status" value="1"/>
</dbReference>
<dbReference type="Pfam" id="PF00892">
    <property type="entry name" value="EamA"/>
    <property type="match status" value="1"/>
</dbReference>
<dbReference type="SUPFAM" id="SSF103481">
    <property type="entry name" value="Multidrug resistance efflux transporter EmrE"/>
    <property type="match status" value="1"/>
</dbReference>
<comment type="function">
    <text evidence="1">Translocates 4-amino-4-deoxy-L-arabinose-phosphoundecaprenol (alpha-L-Ara4N-phosphoundecaprenol) from the cytoplasmic to the periplasmic side of the inner membrane.</text>
</comment>
<comment type="pathway">
    <text evidence="1">Bacterial outer membrane biogenesis; lipopolysaccharide biosynthesis.</text>
</comment>
<comment type="subunit">
    <text evidence="1">Heterodimer of ArnE and ArnF.</text>
</comment>
<comment type="subcellular location">
    <subcellularLocation>
        <location evidence="1">Cell inner membrane</location>
        <topology evidence="1">Multi-pass membrane protein</topology>
    </subcellularLocation>
</comment>
<comment type="similarity">
    <text evidence="1">Belongs to the ArnE family.</text>
</comment>
<accession>B4TPI5</accession>
<name>ARNE_SALSV</name>
<feature type="chain" id="PRO_0000383001" description="Probable 4-amino-4-deoxy-L-arabinose-phosphoundecaprenol flippase subunit ArnE">
    <location>
        <begin position="1"/>
        <end position="111"/>
    </location>
</feature>
<feature type="transmembrane region" description="Helical" evidence="1">
    <location>
        <begin position="38"/>
        <end position="58"/>
    </location>
</feature>
<feature type="transmembrane region" description="Helical" evidence="1">
    <location>
        <begin position="61"/>
        <end position="81"/>
    </location>
</feature>
<feature type="transmembrane region" description="Helical" evidence="1">
    <location>
        <begin position="91"/>
        <end position="111"/>
    </location>
</feature>
<feature type="domain" description="EamA" evidence="1">
    <location>
        <begin position="40"/>
        <end position="109"/>
    </location>
</feature>
<keyword id="KW-0997">Cell inner membrane</keyword>
<keyword id="KW-1003">Cell membrane</keyword>
<keyword id="KW-0441">Lipid A biosynthesis</keyword>
<keyword id="KW-0444">Lipid biosynthesis</keyword>
<keyword id="KW-0443">Lipid metabolism</keyword>
<keyword id="KW-0448">Lipopolysaccharide biosynthesis</keyword>
<keyword id="KW-0472">Membrane</keyword>
<keyword id="KW-0812">Transmembrane</keyword>
<keyword id="KW-1133">Transmembrane helix</keyword>
<keyword id="KW-0813">Transport</keyword>
<reference key="1">
    <citation type="journal article" date="2011" name="J. Bacteriol.">
        <title>Comparative genomics of 28 Salmonella enterica isolates: evidence for CRISPR-mediated adaptive sublineage evolution.</title>
        <authorList>
            <person name="Fricke W.F."/>
            <person name="Mammel M.K."/>
            <person name="McDermott P.F."/>
            <person name="Tartera C."/>
            <person name="White D.G."/>
            <person name="Leclerc J.E."/>
            <person name="Ravel J."/>
            <person name="Cebula T.A."/>
        </authorList>
    </citation>
    <scope>NUCLEOTIDE SEQUENCE [LARGE SCALE GENOMIC DNA]</scope>
    <source>
        <strain>CVM19633</strain>
    </source>
</reference>
<gene>
    <name evidence="1" type="primary">arnE</name>
    <name type="ordered locus">SeSA_A2530</name>
</gene>